<feature type="chain" id="PRO_1000092169" description="Phosphoadenosine 5'-phosphosulfate reductase">
    <location>
        <begin position="1"/>
        <end position="248"/>
    </location>
</feature>
<feature type="active site" description="Nucleophile; cysteine thiosulfonate intermediate" evidence="1">
    <location>
        <position position="239"/>
    </location>
</feature>
<proteinExistence type="inferred from homology"/>
<reference key="1">
    <citation type="journal article" date="2008" name="ISME J.">
        <title>Comparative genomics of two ecotypes of the marine planktonic copiotroph Alteromonas macleodii suggests alternative lifestyles associated with different kinds of particulate organic matter.</title>
        <authorList>
            <person name="Ivars-Martinez E."/>
            <person name="Martin-Cuadrado A.-B."/>
            <person name="D'Auria G."/>
            <person name="Mira A."/>
            <person name="Ferriera S."/>
            <person name="Johnson J."/>
            <person name="Friedman R."/>
            <person name="Rodriguez-Valera F."/>
        </authorList>
    </citation>
    <scope>NUCLEOTIDE SEQUENCE [LARGE SCALE GENOMIC DNA]</scope>
    <source>
        <strain>DSM 17117 / CIP 110805 / LMG 28347 / Deep ecotype</strain>
    </source>
</reference>
<name>CYSH_ALTMD</name>
<protein>
    <recommendedName>
        <fullName evidence="1">Phosphoadenosine 5'-phosphosulfate reductase</fullName>
        <shortName evidence="1">PAPS reductase</shortName>
        <ecNumber evidence="1">1.8.4.8</ecNumber>
    </recommendedName>
    <alternativeName>
        <fullName evidence="1">3'-phosphoadenylylsulfate reductase</fullName>
    </alternativeName>
    <alternativeName>
        <fullName evidence="1">PAPS reductase, thioredoxin dependent</fullName>
    </alternativeName>
    <alternativeName>
        <fullName evidence="1">PAPS sulfotransferase</fullName>
    </alternativeName>
    <alternativeName>
        <fullName evidence="1">PAdoPS reductase</fullName>
    </alternativeName>
</protein>
<organism>
    <name type="scientific">Alteromonas mediterranea (strain DSM 17117 / CIP 110805 / LMG 28347 / Deep ecotype)</name>
    <dbReference type="NCBI Taxonomy" id="1774373"/>
    <lineage>
        <taxon>Bacteria</taxon>
        <taxon>Pseudomonadati</taxon>
        <taxon>Pseudomonadota</taxon>
        <taxon>Gammaproteobacteria</taxon>
        <taxon>Alteromonadales</taxon>
        <taxon>Alteromonadaceae</taxon>
        <taxon>Alteromonas/Salinimonas group</taxon>
        <taxon>Alteromonas</taxon>
    </lineage>
</organism>
<accession>B4RYS5</accession>
<accession>F2G4G0</accession>
<gene>
    <name evidence="1" type="primary">cysH1</name>
    <name type="ordered locus">MADE_1016730</name>
</gene>
<gene>
    <name evidence="1" type="primary">cysH2</name>
    <name type="ordered locus">MADE_1017320</name>
</gene>
<sequence length="248" mass="28527">MTNSTAEKQQPLTLDISKEALADINDMLEKTTAQQRVAWALNNLPDTHIVSSSFGAQSAVMLHMLTQVQPDIPVVLTDTGYLFPETYKFIDELVEKLNLNLHVYRADMSSAWQEARFGRLWEQGVEGIEKYNKLNKVEPMQRALRELNAGTWFAGLRRSQSDTRGKLPVLQKVGQQFKLYPIIDWSNKDLHYYLKDNELSYHPLWEQGYVSIGDWHTTQSLQEGMSEQDTRFFGLKRECGLHEFGDGI</sequence>
<evidence type="ECO:0000255" key="1">
    <source>
        <dbReference type="HAMAP-Rule" id="MF_00063"/>
    </source>
</evidence>
<dbReference type="EC" id="1.8.4.8" evidence="1"/>
<dbReference type="EMBL" id="CP001103">
    <property type="protein sequence ID" value="AEA99470.1"/>
    <property type="molecule type" value="Genomic_DNA"/>
</dbReference>
<dbReference type="EMBL" id="CP001103">
    <property type="protein sequence ID" value="AEA99588.1"/>
    <property type="molecule type" value="Genomic_DNA"/>
</dbReference>
<dbReference type="RefSeq" id="WP_012519758.1">
    <property type="nucleotide sequence ID" value="NC_011138.3"/>
</dbReference>
<dbReference type="SMR" id="B4RYS5"/>
<dbReference type="KEGG" id="amc:MADE_1016730"/>
<dbReference type="HOGENOM" id="CLU_044089_3_0_6"/>
<dbReference type="UniPathway" id="UPA00140">
    <property type="reaction ID" value="UER00206"/>
</dbReference>
<dbReference type="Proteomes" id="UP000001870">
    <property type="component" value="Chromosome"/>
</dbReference>
<dbReference type="GO" id="GO:0005737">
    <property type="term" value="C:cytoplasm"/>
    <property type="evidence" value="ECO:0007669"/>
    <property type="project" value="UniProtKB-SubCell"/>
</dbReference>
<dbReference type="GO" id="GO:0004604">
    <property type="term" value="F:phosphoadenylyl-sulfate reductase (thioredoxin) activity"/>
    <property type="evidence" value="ECO:0007669"/>
    <property type="project" value="UniProtKB-UniRule"/>
</dbReference>
<dbReference type="GO" id="GO:0070814">
    <property type="term" value="P:hydrogen sulfide biosynthetic process"/>
    <property type="evidence" value="ECO:0007669"/>
    <property type="project" value="UniProtKB-UniRule"/>
</dbReference>
<dbReference type="GO" id="GO:0019379">
    <property type="term" value="P:sulfate assimilation, phosphoadenylyl sulfate reduction by phosphoadenylyl-sulfate reductase (thioredoxin)"/>
    <property type="evidence" value="ECO:0007669"/>
    <property type="project" value="UniProtKB-UniRule"/>
</dbReference>
<dbReference type="CDD" id="cd23945">
    <property type="entry name" value="PAPS_reductase"/>
    <property type="match status" value="1"/>
</dbReference>
<dbReference type="FunFam" id="3.40.50.620:FF:000043">
    <property type="entry name" value="Phosphoadenosine phosphosulfate reductase"/>
    <property type="match status" value="1"/>
</dbReference>
<dbReference type="Gene3D" id="3.40.50.620">
    <property type="entry name" value="HUPs"/>
    <property type="match status" value="1"/>
</dbReference>
<dbReference type="HAMAP" id="MF_00063">
    <property type="entry name" value="CysH"/>
    <property type="match status" value="1"/>
</dbReference>
<dbReference type="InterPro" id="IPR004511">
    <property type="entry name" value="PAPS/APS_Rdtase"/>
</dbReference>
<dbReference type="InterPro" id="IPR002500">
    <property type="entry name" value="PAPS_reduct_dom"/>
</dbReference>
<dbReference type="InterPro" id="IPR011800">
    <property type="entry name" value="PAPS_reductase_CysH"/>
</dbReference>
<dbReference type="InterPro" id="IPR014729">
    <property type="entry name" value="Rossmann-like_a/b/a_fold"/>
</dbReference>
<dbReference type="NCBIfam" id="TIGR00434">
    <property type="entry name" value="cysH"/>
    <property type="match status" value="1"/>
</dbReference>
<dbReference type="NCBIfam" id="TIGR02057">
    <property type="entry name" value="PAPS_reductase"/>
    <property type="match status" value="1"/>
</dbReference>
<dbReference type="NCBIfam" id="NF002537">
    <property type="entry name" value="PRK02090.1"/>
    <property type="match status" value="1"/>
</dbReference>
<dbReference type="PANTHER" id="PTHR46509">
    <property type="entry name" value="PHOSPHOADENOSINE PHOSPHOSULFATE REDUCTASE"/>
    <property type="match status" value="1"/>
</dbReference>
<dbReference type="PANTHER" id="PTHR46509:SF1">
    <property type="entry name" value="PHOSPHOADENOSINE PHOSPHOSULFATE REDUCTASE"/>
    <property type="match status" value="1"/>
</dbReference>
<dbReference type="Pfam" id="PF01507">
    <property type="entry name" value="PAPS_reduct"/>
    <property type="match status" value="1"/>
</dbReference>
<dbReference type="PIRSF" id="PIRSF000857">
    <property type="entry name" value="PAPS_reductase"/>
    <property type="match status" value="1"/>
</dbReference>
<dbReference type="SUPFAM" id="SSF52402">
    <property type="entry name" value="Adenine nucleotide alpha hydrolases-like"/>
    <property type="match status" value="1"/>
</dbReference>
<comment type="function">
    <text evidence="1">Catalyzes the formation of sulfite from phosphoadenosine 5'-phosphosulfate (PAPS) using thioredoxin as an electron donor.</text>
</comment>
<comment type="catalytic activity">
    <reaction evidence="1">
        <text>[thioredoxin]-disulfide + sulfite + adenosine 3',5'-bisphosphate + 2 H(+) = [thioredoxin]-dithiol + 3'-phosphoadenylyl sulfate</text>
        <dbReference type="Rhea" id="RHEA:11724"/>
        <dbReference type="Rhea" id="RHEA-COMP:10698"/>
        <dbReference type="Rhea" id="RHEA-COMP:10700"/>
        <dbReference type="ChEBI" id="CHEBI:15378"/>
        <dbReference type="ChEBI" id="CHEBI:17359"/>
        <dbReference type="ChEBI" id="CHEBI:29950"/>
        <dbReference type="ChEBI" id="CHEBI:50058"/>
        <dbReference type="ChEBI" id="CHEBI:58339"/>
        <dbReference type="ChEBI" id="CHEBI:58343"/>
        <dbReference type="EC" id="1.8.4.8"/>
    </reaction>
</comment>
<comment type="pathway">
    <text evidence="1">Sulfur metabolism; hydrogen sulfide biosynthesis; sulfite from sulfate: step 3/3.</text>
</comment>
<comment type="subcellular location">
    <subcellularLocation>
        <location evidence="1">Cytoplasm</location>
    </subcellularLocation>
</comment>
<comment type="similarity">
    <text evidence="1">Belongs to the PAPS reductase family. CysH subfamily.</text>
</comment>
<keyword id="KW-0963">Cytoplasm</keyword>
<keyword id="KW-0560">Oxidoreductase</keyword>